<accession>P0A434</accession>
<accession>P13739</accession>
<accession>P16648</accession>
<proteinExistence type="evidence at protein level"/>
<gene>
    <name type="primary">opd</name>
</gene>
<dbReference type="EC" id="3.1.8.1"/>
<dbReference type="EMBL" id="M20392">
    <property type="protein sequence ID" value="AAA98299.1"/>
    <property type="status" value="ALT_FRAME"/>
    <property type="molecule type" value="Genomic_DNA"/>
</dbReference>
<dbReference type="PIR" id="A28214">
    <property type="entry name" value="A28214"/>
</dbReference>
<dbReference type="PDB" id="1DPM">
    <property type="method" value="X-ray"/>
    <property type="resolution" value="2.10 A"/>
    <property type="chains" value="A/B=36-363"/>
</dbReference>
<dbReference type="PDB" id="1EYW">
    <property type="method" value="X-ray"/>
    <property type="resolution" value="1.90 A"/>
    <property type="chains" value="A=35-365"/>
</dbReference>
<dbReference type="PDB" id="1EZ2">
    <property type="method" value="X-ray"/>
    <property type="resolution" value="1.90 A"/>
    <property type="chains" value="A/B=35-365"/>
</dbReference>
<dbReference type="PDB" id="1HZY">
    <property type="method" value="X-ray"/>
    <property type="resolution" value="1.30 A"/>
    <property type="chains" value="A/B=34-365"/>
</dbReference>
<dbReference type="PDB" id="1I0B">
    <property type="method" value="X-ray"/>
    <property type="resolution" value="1.30 A"/>
    <property type="chains" value="A/B=34-365"/>
</dbReference>
<dbReference type="PDB" id="1I0D">
    <property type="method" value="X-ray"/>
    <property type="resolution" value="1.30 A"/>
    <property type="chains" value="A/B=34-365"/>
</dbReference>
<dbReference type="PDB" id="1JGM">
    <property type="method" value="X-ray"/>
    <property type="resolution" value="1.30 A"/>
    <property type="chains" value="A/B=30-365"/>
</dbReference>
<dbReference type="PDB" id="1PSC">
    <property type="method" value="X-ray"/>
    <property type="resolution" value="2.00 A"/>
    <property type="chains" value="A/B=1-365"/>
</dbReference>
<dbReference type="PDB" id="1PTA">
    <property type="method" value="X-ray"/>
    <property type="resolution" value="2.10 A"/>
    <property type="chains" value="A=36-362"/>
</dbReference>
<dbReference type="PDB" id="1QW7">
    <property type="method" value="X-ray"/>
    <property type="resolution" value="1.90 A"/>
    <property type="chains" value="A/B=30-365"/>
</dbReference>
<dbReference type="PDB" id="2O4M">
    <property type="method" value="X-ray"/>
    <property type="resolution" value="1.64 A"/>
    <property type="chains" value="A/B/C/P=34-364"/>
</dbReference>
<dbReference type="PDB" id="2O4Q">
    <property type="method" value="X-ray"/>
    <property type="resolution" value="1.95 A"/>
    <property type="chains" value="A/B/K/P=34-364"/>
</dbReference>
<dbReference type="PDB" id="2OB3">
    <property type="method" value="X-ray"/>
    <property type="resolution" value="1.04 A"/>
    <property type="chains" value="A/B=35-364"/>
</dbReference>
<dbReference type="PDB" id="2OQL">
    <property type="method" value="X-ray"/>
    <property type="resolution" value="1.80 A"/>
    <property type="chains" value="A/B=35-365"/>
</dbReference>
<dbReference type="PDB" id="3CAK">
    <property type="method" value="X-ray"/>
    <property type="resolution" value="1.83 A"/>
    <property type="chains" value="A/B=35-365"/>
</dbReference>
<dbReference type="PDB" id="3CS2">
    <property type="method" value="X-ray"/>
    <property type="resolution" value="1.95 A"/>
    <property type="chains" value="A/B/K/P=34-364"/>
</dbReference>
<dbReference type="PDB" id="3E3H">
    <property type="method" value="X-ray"/>
    <property type="resolution" value="2.15 A"/>
    <property type="chains" value="A/B=30-365"/>
</dbReference>
<dbReference type="PDB" id="3UPM">
    <property type="method" value="X-ray"/>
    <property type="resolution" value="1.95 A"/>
    <property type="chains" value="A/B=35-361"/>
</dbReference>
<dbReference type="PDB" id="3UR2">
    <property type="method" value="X-ray"/>
    <property type="resolution" value="2.00 A"/>
    <property type="chains" value="A/B=35-363"/>
</dbReference>
<dbReference type="PDB" id="3UR5">
    <property type="method" value="X-ray"/>
    <property type="resolution" value="1.60 A"/>
    <property type="chains" value="A/B=35-361"/>
</dbReference>
<dbReference type="PDB" id="3URA">
    <property type="method" value="X-ray"/>
    <property type="resolution" value="1.88 A"/>
    <property type="chains" value="A/B=35-361"/>
</dbReference>
<dbReference type="PDB" id="3URB">
    <property type="method" value="X-ray"/>
    <property type="resolution" value="1.77 A"/>
    <property type="chains" value="A/B=35-361"/>
</dbReference>
<dbReference type="PDB" id="3URN">
    <property type="method" value="X-ray"/>
    <property type="resolution" value="1.95 A"/>
    <property type="chains" value="A/B=35-361"/>
</dbReference>
<dbReference type="PDB" id="3URQ">
    <property type="method" value="X-ray"/>
    <property type="resolution" value="2.10 A"/>
    <property type="chains" value="A/B=35-361"/>
</dbReference>
<dbReference type="PDB" id="4E3T">
    <property type="method" value="X-ray"/>
    <property type="resolution" value="1.65 A"/>
    <property type="chains" value="A/B=34-365"/>
</dbReference>
<dbReference type="PDB" id="4GY0">
    <property type="method" value="X-ray"/>
    <property type="resolution" value="1.85 A"/>
    <property type="chains" value="A/B=34-365"/>
</dbReference>
<dbReference type="PDB" id="4GY1">
    <property type="method" value="X-ray"/>
    <property type="resolution" value="1.50 A"/>
    <property type="chains" value="A/B=34-365"/>
</dbReference>
<dbReference type="PDB" id="4ZST">
    <property type="method" value="X-ray"/>
    <property type="resolution" value="2.01 A"/>
    <property type="chains" value="A/B=30-365"/>
</dbReference>
<dbReference type="PDB" id="4ZSU">
    <property type="method" value="X-ray"/>
    <property type="resolution" value="2.01 A"/>
    <property type="chains" value="A/B=30-365"/>
</dbReference>
<dbReference type="PDB" id="5W6B">
    <property type="method" value="X-ray"/>
    <property type="resolution" value="1.74 A"/>
    <property type="chains" value="A/G=34-365"/>
</dbReference>
<dbReference type="PDB" id="5WCQ">
    <property type="method" value="X-ray"/>
    <property type="resolution" value="1.58 A"/>
    <property type="chains" value="A/G=34-365"/>
</dbReference>
<dbReference type="PDB" id="6AML">
    <property type="method" value="X-ray"/>
    <property type="resolution" value="1.46 A"/>
    <property type="chains" value="A/G=34-365"/>
</dbReference>
<dbReference type="PDB" id="6FFW">
    <property type="method" value="X-ray"/>
    <property type="resolution" value="1.50 A"/>
    <property type="chains" value="A/B=32-365"/>
</dbReference>
<dbReference type="PDB" id="6FQE">
    <property type="method" value="X-ray"/>
    <property type="resolution" value="1.75 A"/>
    <property type="chains" value="A/B=34-365"/>
</dbReference>
<dbReference type="PDB" id="6FRZ">
    <property type="method" value="X-ray"/>
    <property type="resolution" value="1.65 A"/>
    <property type="chains" value="A/B=32-365"/>
</dbReference>
<dbReference type="PDB" id="6FS3">
    <property type="method" value="X-ray"/>
    <property type="resolution" value="1.75 A"/>
    <property type="chains" value="A/B=32-365"/>
</dbReference>
<dbReference type="PDB" id="6FU6">
    <property type="method" value="X-ray"/>
    <property type="resolution" value="1.95 A"/>
    <property type="chains" value="A/B=34-365"/>
</dbReference>
<dbReference type="PDB" id="6FWE">
    <property type="method" value="X-ray"/>
    <property type="resolution" value="1.77 A"/>
    <property type="chains" value="A=34-365"/>
</dbReference>
<dbReference type="PDB" id="6G1J">
    <property type="method" value="X-ray"/>
    <property type="resolution" value="2.10 A"/>
    <property type="chains" value="A=34-365"/>
</dbReference>
<dbReference type="PDB" id="6G3M">
    <property type="method" value="X-ray"/>
    <property type="resolution" value="1.67 A"/>
    <property type="chains" value="A=34-365"/>
</dbReference>
<dbReference type="PDB" id="6GBJ">
    <property type="method" value="X-ray"/>
    <property type="resolution" value="1.63 A"/>
    <property type="chains" value="A=34-365"/>
</dbReference>
<dbReference type="PDB" id="6GBK">
    <property type="method" value="X-ray"/>
    <property type="resolution" value="1.90 A"/>
    <property type="chains" value="A/B=34-365"/>
</dbReference>
<dbReference type="PDB" id="6GBL">
    <property type="method" value="X-ray"/>
    <property type="resolution" value="1.95 A"/>
    <property type="chains" value="A/B=34-365"/>
</dbReference>
<dbReference type="PDB" id="7P85">
    <property type="method" value="X-ray"/>
    <property type="resolution" value="1.47 A"/>
    <property type="chains" value="A=30-364"/>
</dbReference>
<dbReference type="PDB" id="8P7F">
    <property type="method" value="X-ray"/>
    <property type="resolution" value="2.00 A"/>
    <property type="chains" value="A=34-365"/>
</dbReference>
<dbReference type="PDB" id="8P7H">
    <property type="method" value="X-ray"/>
    <property type="resolution" value="1.77 A"/>
    <property type="chains" value="A=34-362"/>
</dbReference>
<dbReference type="PDB" id="8P7I">
    <property type="method" value="X-ray"/>
    <property type="resolution" value="1.70 A"/>
    <property type="chains" value="A/B=34-365"/>
</dbReference>
<dbReference type="PDB" id="8P7K">
    <property type="method" value="X-ray"/>
    <property type="resolution" value="1.93 A"/>
    <property type="chains" value="A/B=34-365"/>
</dbReference>
<dbReference type="PDB" id="8P7M">
    <property type="method" value="X-ray"/>
    <property type="resolution" value="1.85 A"/>
    <property type="chains" value="A=34-361"/>
</dbReference>
<dbReference type="PDB" id="8P7N">
    <property type="method" value="X-ray"/>
    <property type="resolution" value="3.20 A"/>
    <property type="chains" value="A/B/C/D=34-362"/>
</dbReference>
<dbReference type="PDB" id="8P7Q">
    <property type="method" value="X-ray"/>
    <property type="resolution" value="1.77 A"/>
    <property type="chains" value="A=34-365"/>
</dbReference>
<dbReference type="PDB" id="8P7R">
    <property type="method" value="X-ray"/>
    <property type="resolution" value="1.85 A"/>
    <property type="chains" value="A=34-365"/>
</dbReference>
<dbReference type="PDB" id="8P7S">
    <property type="method" value="X-ray"/>
    <property type="resolution" value="1.77 A"/>
    <property type="chains" value="A=34-361"/>
</dbReference>
<dbReference type="PDB" id="8P7T">
    <property type="method" value="X-ray"/>
    <property type="resolution" value="1.80 A"/>
    <property type="chains" value="A=34-365"/>
</dbReference>
<dbReference type="PDB" id="8P7U">
    <property type="method" value="X-ray"/>
    <property type="resolution" value="1.38 A"/>
    <property type="chains" value="A=34-364"/>
</dbReference>
<dbReference type="PDB" id="8P7V">
    <property type="method" value="X-ray"/>
    <property type="resolution" value="1.74 A"/>
    <property type="chains" value="A=34-364"/>
</dbReference>
<dbReference type="PDBsum" id="1DPM"/>
<dbReference type="PDBsum" id="1EYW"/>
<dbReference type="PDBsum" id="1EZ2"/>
<dbReference type="PDBsum" id="1HZY"/>
<dbReference type="PDBsum" id="1I0B"/>
<dbReference type="PDBsum" id="1I0D"/>
<dbReference type="PDBsum" id="1JGM"/>
<dbReference type="PDBsum" id="1PSC"/>
<dbReference type="PDBsum" id="1PTA"/>
<dbReference type="PDBsum" id="1QW7"/>
<dbReference type="PDBsum" id="2O4M"/>
<dbReference type="PDBsum" id="2O4Q"/>
<dbReference type="PDBsum" id="2OB3"/>
<dbReference type="PDBsum" id="2OQL"/>
<dbReference type="PDBsum" id="3CAK"/>
<dbReference type="PDBsum" id="3CS2"/>
<dbReference type="PDBsum" id="3E3H"/>
<dbReference type="PDBsum" id="3UPM"/>
<dbReference type="PDBsum" id="3UR2"/>
<dbReference type="PDBsum" id="3UR5"/>
<dbReference type="PDBsum" id="3URA"/>
<dbReference type="PDBsum" id="3URB"/>
<dbReference type="PDBsum" id="3URN"/>
<dbReference type="PDBsum" id="3URQ"/>
<dbReference type="PDBsum" id="4E3T"/>
<dbReference type="PDBsum" id="4GY0"/>
<dbReference type="PDBsum" id="4GY1"/>
<dbReference type="PDBsum" id="4ZST"/>
<dbReference type="PDBsum" id="4ZSU"/>
<dbReference type="PDBsum" id="5W6B"/>
<dbReference type="PDBsum" id="5WCQ"/>
<dbReference type="PDBsum" id="6AML"/>
<dbReference type="PDBsum" id="6FFW"/>
<dbReference type="PDBsum" id="6FQE"/>
<dbReference type="PDBsum" id="6FRZ"/>
<dbReference type="PDBsum" id="6FS3"/>
<dbReference type="PDBsum" id="6FU6"/>
<dbReference type="PDBsum" id="6FWE"/>
<dbReference type="PDBsum" id="6G1J"/>
<dbReference type="PDBsum" id="6G3M"/>
<dbReference type="PDBsum" id="6GBJ"/>
<dbReference type="PDBsum" id="6GBK"/>
<dbReference type="PDBsum" id="6GBL"/>
<dbReference type="PDBsum" id="7P85"/>
<dbReference type="PDBsum" id="8P7F"/>
<dbReference type="PDBsum" id="8P7H"/>
<dbReference type="PDBsum" id="8P7I"/>
<dbReference type="PDBsum" id="8P7K"/>
<dbReference type="PDBsum" id="8P7M"/>
<dbReference type="PDBsum" id="8P7N"/>
<dbReference type="PDBsum" id="8P7Q"/>
<dbReference type="PDBsum" id="8P7R"/>
<dbReference type="PDBsum" id="8P7S"/>
<dbReference type="PDBsum" id="8P7T"/>
<dbReference type="PDBsum" id="8P7U"/>
<dbReference type="PDBsum" id="8P7V"/>
<dbReference type="SMR" id="P0A434"/>
<dbReference type="DrugBank" id="DB02138">
    <property type="generic name" value="Diethyl 4-Methylbenzylphosphonate"/>
</dbReference>
<dbReference type="DrugBank" id="DB02127">
    <property type="generic name" value="Diisopropyl methylphosphonate"/>
</dbReference>
<dbReference type="DrugBank" id="DB03347">
    <property type="generic name" value="Triethyl phosphate"/>
</dbReference>
<dbReference type="BioCyc" id="MetaCyc:MONOMER-3322"/>
<dbReference type="BRENDA" id="3.1.1.2">
    <property type="organism ID" value="982"/>
</dbReference>
<dbReference type="BRENDA" id="3.1.8.1">
    <property type="organism ID" value="982"/>
</dbReference>
<dbReference type="BRENDA" id="3.1.8.2">
    <property type="organism ID" value="982"/>
</dbReference>
<dbReference type="SABIO-RK" id="P0A434"/>
<dbReference type="EvolutionaryTrace" id="P0A434"/>
<dbReference type="GO" id="GO:0005886">
    <property type="term" value="C:plasma membrane"/>
    <property type="evidence" value="ECO:0000314"/>
    <property type="project" value="CACAO"/>
</dbReference>
<dbReference type="GO" id="GO:0004063">
    <property type="term" value="F:aryldialkylphosphatase activity"/>
    <property type="evidence" value="ECO:0000314"/>
    <property type="project" value="CACAO"/>
</dbReference>
<dbReference type="GO" id="GO:0008270">
    <property type="term" value="F:zinc ion binding"/>
    <property type="evidence" value="ECO:0007669"/>
    <property type="project" value="InterPro"/>
</dbReference>
<dbReference type="GO" id="GO:0009056">
    <property type="term" value="P:catabolic process"/>
    <property type="evidence" value="ECO:0007669"/>
    <property type="project" value="InterPro"/>
</dbReference>
<dbReference type="CDD" id="cd00530">
    <property type="entry name" value="PTE"/>
    <property type="match status" value="1"/>
</dbReference>
<dbReference type="FunFam" id="3.20.20.140:FF:000073">
    <property type="entry name" value="Parathion hydrolase"/>
    <property type="match status" value="1"/>
</dbReference>
<dbReference type="Gene3D" id="3.20.20.140">
    <property type="entry name" value="Metal-dependent hydrolases"/>
    <property type="match status" value="1"/>
</dbReference>
<dbReference type="InterPro" id="IPR017947">
    <property type="entry name" value="AryldialkylPase_Zn-BS"/>
</dbReference>
<dbReference type="InterPro" id="IPR032466">
    <property type="entry name" value="Metal_Hydrolase"/>
</dbReference>
<dbReference type="InterPro" id="IPR001559">
    <property type="entry name" value="Phosphotriesterase"/>
</dbReference>
<dbReference type="InterPro" id="IPR006311">
    <property type="entry name" value="TAT_signal"/>
</dbReference>
<dbReference type="NCBIfam" id="NF041153">
    <property type="entry name" value="organophos_OPH"/>
    <property type="match status" value="1"/>
</dbReference>
<dbReference type="PANTHER" id="PTHR10819">
    <property type="entry name" value="PHOSPHOTRIESTERASE-RELATED"/>
    <property type="match status" value="1"/>
</dbReference>
<dbReference type="PANTHER" id="PTHR10819:SF3">
    <property type="entry name" value="PHOSPHOTRIESTERASE-RELATED PROTEIN"/>
    <property type="match status" value="1"/>
</dbReference>
<dbReference type="Pfam" id="PF02126">
    <property type="entry name" value="PTE"/>
    <property type="match status" value="1"/>
</dbReference>
<dbReference type="SUPFAM" id="SSF51556">
    <property type="entry name" value="Metallo-dependent hydrolases"/>
    <property type="match status" value="1"/>
</dbReference>
<dbReference type="PROSITE" id="PS01322">
    <property type="entry name" value="PHOSPHOTRIESTERASE_1"/>
    <property type="match status" value="1"/>
</dbReference>
<dbReference type="PROSITE" id="PS51347">
    <property type="entry name" value="PHOSPHOTRIESTERASE_2"/>
    <property type="match status" value="1"/>
</dbReference>
<dbReference type="PROSITE" id="PS51318">
    <property type="entry name" value="TAT"/>
    <property type="match status" value="1"/>
</dbReference>
<organism>
    <name type="scientific">Brevundimonas diminuta</name>
    <name type="common">Pseudomonas diminuta</name>
    <dbReference type="NCBI Taxonomy" id="293"/>
    <lineage>
        <taxon>Bacteria</taxon>
        <taxon>Pseudomonadati</taxon>
        <taxon>Pseudomonadota</taxon>
        <taxon>Alphaproteobacteria</taxon>
        <taxon>Caulobacterales</taxon>
        <taxon>Caulobacteraceae</taxon>
        <taxon>Brevundimonas</taxon>
    </lineage>
</organism>
<comment type="function">
    <text>Has an unusual substrate specificity for synthetic organophosphate triesters and phosphorofluoridates. All of the phosphate triesters found to be substrates are synthetic compounds. The identity of any naturally occurring substrate for the enzyme is unknown. Has no detectable activity with phosphate monoesters or diesters and no activity as an esterase or protease. It catalyzes the hydrolysis of the insecticide paraoxon at a rate approaching the diffusion limit and thus appears to be optimally evolved for utilizing this synthetic substrate.</text>
</comment>
<comment type="catalytic activity">
    <reaction>
        <text>An aryl dialkyl phosphate + H2O = dialkyl phosphate + an aryl alcohol.</text>
        <dbReference type="EC" id="3.1.8.1"/>
    </reaction>
</comment>
<comment type="cofactor">
    <cofactor>
        <name>Zn(2+)</name>
        <dbReference type="ChEBI" id="CHEBI:29105"/>
    </cofactor>
    <text>Binds 2 Zn(2+) ions per subunit.</text>
</comment>
<comment type="subunit">
    <text>Homodimer.</text>
</comment>
<comment type="subcellular location">
    <subcellularLocation>
        <location>Cell membrane</location>
        <topology>Peripheral membrane protein</topology>
    </subcellularLocation>
</comment>
<comment type="PTM">
    <text>Predicted to be exported by the Tat system. The position of the signal peptide cleavage has been experimentally proven.</text>
</comment>
<comment type="biotechnology">
    <text>Has attracted interest because of its potential use in the detoxification of chemical waste and warfare agents and its ability to degrade agricultural pesticides such as parathion.</text>
</comment>
<comment type="similarity">
    <text evidence="2">Belongs to the metallo-dependent hydrolases superfamily. Phosphotriesterase family.</text>
</comment>
<comment type="sequence caution" evidence="5">
    <conflict type="frameshift">
        <sequence resource="EMBL-CDS" id="AAA98299"/>
    </conflict>
</comment>
<feature type="signal peptide" description="Tat-type signal" evidence="1 4">
    <location>
        <begin position="1"/>
        <end position="29"/>
    </location>
</feature>
<feature type="chain" id="PRO_0000029860" description="Parathion hydrolase">
    <location>
        <begin position="30"/>
        <end position="365"/>
    </location>
</feature>
<feature type="binding site" evidence="3 6 7 8 9 10 11 12 13">
    <location>
        <position position="55"/>
    </location>
    <ligand>
        <name>Zn(2+)</name>
        <dbReference type="ChEBI" id="CHEBI:29105"/>
        <label>1</label>
    </ligand>
</feature>
<feature type="binding site" evidence="3 6 7 8 9 10 11 12 13">
    <location>
        <position position="57"/>
    </location>
    <ligand>
        <name>Zn(2+)</name>
        <dbReference type="ChEBI" id="CHEBI:29105"/>
        <label>1</label>
    </ligand>
</feature>
<feature type="binding site" description="via carbamate group" evidence="3 6 7 8 9 10 11 12 13">
    <location>
        <position position="169"/>
    </location>
    <ligand>
        <name>Zn(2+)</name>
        <dbReference type="ChEBI" id="CHEBI:29105"/>
        <label>1</label>
    </ligand>
</feature>
<feature type="binding site" description="via carbamate group" evidence="3 6 7 8 9 10 11 12 13">
    <location>
        <position position="169"/>
    </location>
    <ligand>
        <name>Zn(2+)</name>
        <dbReference type="ChEBI" id="CHEBI:29105"/>
        <label>2</label>
    </ligand>
</feature>
<feature type="binding site" evidence="3 6 7 8 9 10 11 12 13">
    <location>
        <position position="201"/>
    </location>
    <ligand>
        <name>Zn(2+)</name>
        <dbReference type="ChEBI" id="CHEBI:29105"/>
        <label>2</label>
    </ligand>
</feature>
<feature type="binding site" evidence="3 6 7 8 9 10 11 12 13">
    <location>
        <position position="230"/>
    </location>
    <ligand>
        <name>Zn(2+)</name>
        <dbReference type="ChEBI" id="CHEBI:29105"/>
        <label>2</label>
    </ligand>
</feature>
<feature type="binding site" evidence="3 6 7 8 9 10 11 12 13">
    <location>
        <position position="301"/>
    </location>
    <ligand>
        <name>Zn(2+)</name>
        <dbReference type="ChEBI" id="CHEBI:29105"/>
        <label>1</label>
    </ligand>
</feature>
<feature type="modified residue" description="N6-carboxylysine" evidence="2 3 6 7 8 9 10 11 12 13">
    <location>
        <position position="169"/>
    </location>
</feature>
<feature type="strand" evidence="18">
    <location>
        <begin position="32"/>
        <end position="34"/>
    </location>
</feature>
<feature type="strand" evidence="16">
    <location>
        <begin position="37"/>
        <end position="39"/>
    </location>
</feature>
<feature type="strand" evidence="16">
    <location>
        <begin position="42"/>
        <end position="44"/>
    </location>
</feature>
<feature type="helix" evidence="16">
    <location>
        <begin position="46"/>
        <end position="49"/>
    </location>
</feature>
<feature type="strand" evidence="16">
    <location>
        <begin position="51"/>
        <end position="56"/>
    </location>
</feature>
<feature type="strand" evidence="16">
    <location>
        <begin position="58"/>
        <end position="60"/>
    </location>
</feature>
<feature type="helix" evidence="19">
    <location>
        <begin position="62"/>
        <end position="64"/>
    </location>
</feature>
<feature type="helix" evidence="16">
    <location>
        <begin position="65"/>
        <end position="68"/>
    </location>
</feature>
<feature type="helix" evidence="16">
    <location>
        <begin position="70"/>
        <end position="73"/>
    </location>
</feature>
<feature type="helix" evidence="16">
    <location>
        <begin position="76"/>
        <end position="92"/>
    </location>
</feature>
<feature type="strand" evidence="16">
    <location>
        <begin position="97"/>
        <end position="100"/>
    </location>
</feature>
<feature type="helix" evidence="16">
    <location>
        <begin position="104"/>
        <end position="106"/>
    </location>
</feature>
<feature type="helix" evidence="16">
    <location>
        <begin position="110"/>
        <end position="120"/>
    </location>
</feature>
<feature type="strand" evidence="16">
    <location>
        <begin position="123"/>
        <end position="125"/>
    </location>
</feature>
<feature type="strand" evidence="16">
    <location>
        <begin position="127"/>
        <end position="129"/>
    </location>
</feature>
<feature type="helix" evidence="16">
    <location>
        <begin position="136"/>
        <end position="139"/>
    </location>
</feature>
<feature type="helix" evidence="16">
    <location>
        <begin position="143"/>
        <end position="155"/>
    </location>
</feature>
<feature type="turn" evidence="14">
    <location>
        <begin position="159"/>
        <end position="162"/>
    </location>
</feature>
<feature type="strand" evidence="16">
    <location>
        <begin position="166"/>
        <end position="171"/>
    </location>
</feature>
<feature type="strand" evidence="16">
    <location>
        <begin position="173"/>
        <end position="175"/>
    </location>
</feature>
<feature type="helix" evidence="16">
    <location>
        <begin position="178"/>
        <end position="194"/>
    </location>
</feature>
<feature type="strand" evidence="16">
    <location>
        <begin position="198"/>
        <end position="201"/>
    </location>
</feature>
<feature type="helix" evidence="16">
    <location>
        <begin position="204"/>
        <end position="206"/>
    </location>
</feature>
<feature type="helix" evidence="16">
    <location>
        <begin position="208"/>
        <end position="218"/>
    </location>
</feature>
<feature type="helix" evidence="16">
    <location>
        <begin position="223"/>
        <end position="225"/>
    </location>
</feature>
<feature type="strand" evidence="16">
    <location>
        <begin position="226"/>
        <end position="228"/>
    </location>
</feature>
<feature type="helix" evidence="16">
    <location>
        <begin position="231"/>
        <end position="233"/>
    </location>
</feature>
<feature type="helix" evidence="16">
    <location>
        <begin position="237"/>
        <end position="245"/>
    </location>
</feature>
<feature type="strand" evidence="16">
    <location>
        <begin position="249"/>
        <end position="252"/>
    </location>
</feature>
<feature type="helix" evidence="17">
    <location>
        <begin position="255"/>
        <end position="259"/>
    </location>
</feature>
<feature type="helix" evidence="16">
    <location>
        <begin position="266"/>
        <end position="272"/>
    </location>
</feature>
<feature type="helix" evidence="16">
    <location>
        <begin position="277"/>
        <end position="289"/>
    </location>
</feature>
<feature type="turn" evidence="15">
    <location>
        <begin position="290"/>
        <end position="292"/>
    </location>
</feature>
<feature type="helix" evidence="16">
    <location>
        <begin position="293"/>
        <end position="295"/>
    </location>
</feature>
<feature type="strand" evidence="16">
    <location>
        <begin position="296"/>
        <end position="298"/>
    </location>
</feature>
<feature type="helix" evidence="19">
    <location>
        <begin position="300"/>
        <end position="302"/>
    </location>
</feature>
<feature type="strand" evidence="16">
    <location>
        <begin position="304"/>
        <end position="306"/>
    </location>
</feature>
<feature type="strand" evidence="16">
    <location>
        <begin position="308"/>
        <end position="310"/>
    </location>
</feature>
<feature type="helix" evidence="16">
    <location>
        <begin position="313"/>
        <end position="320"/>
    </location>
</feature>
<feature type="helix" evidence="16">
    <location>
        <begin position="324"/>
        <end position="326"/>
    </location>
</feature>
<feature type="helix" evidence="16">
    <location>
        <begin position="327"/>
        <end position="330"/>
    </location>
</feature>
<feature type="helix" evidence="16">
    <location>
        <begin position="332"/>
        <end position="338"/>
    </location>
</feature>
<feature type="helix" evidence="16">
    <location>
        <begin position="343"/>
        <end position="350"/>
    </location>
</feature>
<feature type="helix" evidence="16">
    <location>
        <begin position="352"/>
        <end position="358"/>
    </location>
</feature>
<reference key="1">
    <citation type="journal article" date="1989" name="Biotechnology (N.Y.)">
        <title>Parathion hydrolase gene from Pseudomonas diminuta MG: subcloning, complete nucleotide sequence, and expression of the mature portion of the enzyme in Escherichia coli.</title>
        <authorList>
            <person name="Serdar C.M."/>
            <person name="Murdock D.C."/>
            <person name="Rohde M.F."/>
        </authorList>
    </citation>
    <scope>NUCLEOTIDE SEQUENCE [GENOMIC DNA]</scope>
    <scope>PROTEIN SEQUENCE OF 30-44</scope>
    <source>
        <strain>MG</strain>
    </source>
</reference>
<reference key="2">
    <citation type="journal article" date="1988" name="J. Bacteriol.">
        <title>Cloning and sequencing of a plasmid-borne gene (opd) encoding a phosphotriesterase.</title>
        <authorList>
            <person name="McDaniel C.S."/>
            <person name="Harper L.L."/>
            <person name="Wild J.R."/>
        </authorList>
    </citation>
    <scope>NUCLEOTIDE SEQUENCE [GENOMIC DNA]</scope>
    <source>
        <strain>MG</strain>
    </source>
</reference>
<reference key="3">
    <citation type="journal article" date="1994" name="Biochemistry">
        <title>Identification of the histidine ligands to the binuclear metal center of phosphotriesterase by site-directed mutagenesis.</title>
        <authorList>
            <person name="Kuo J.M."/>
            <person name="Raushel F.M."/>
        </authorList>
    </citation>
    <scope>METAL BINDING SITES</scope>
</reference>
<reference key="4">
    <citation type="journal article" date="1994" name="Biochemistry">
        <title>Three-dimensional structure of phosphotriesterase: an enzyme capable of detoxifying organophosphate nerve agents.</title>
        <authorList>
            <person name="Benning M.M."/>
            <person name="Kuo J.M."/>
            <person name="Raushel F.M."/>
            <person name="Holden H.M."/>
        </authorList>
    </citation>
    <scope>X-RAY CRYSTALLOGRAPHY (2.0 ANGSTROMS)</scope>
</reference>
<reference key="5">
    <citation type="journal article" date="1995" name="Biochemistry">
        <title>Three-dimensional structure of the binuclear metal center of phosphotriesterase.</title>
        <authorList>
            <person name="Benning M.M."/>
            <person name="Kuo J.M."/>
            <person name="Raushel F.M."/>
            <person name="Holden H.M."/>
        </authorList>
    </citation>
    <scope>X-RAY CRYSTALLOGRAPHY (2.0 ANGSTROMS)</scope>
    <scope>CARBOXYLATION AT LYS-169</scope>
</reference>
<reference key="6">
    <citation type="journal article" date="1996" name="Biochemistry">
        <title>Three-dimensional structure of the zinc-containing phosphotriesterase with the bound substrate analog diethyl 4-methylbenzylphosphonate.</title>
        <authorList>
            <person name="Vanhooke J.L."/>
            <person name="Benning M.M."/>
            <person name="Raushel F.M."/>
            <person name="Holden H.M."/>
        </authorList>
    </citation>
    <scope>X-RAY CRYSTALLOGRAPHY (2.1 ANGSTROMS)</scope>
</reference>
<evidence type="ECO:0000255" key="1">
    <source>
        <dbReference type="PROSITE-ProRule" id="PRU00648"/>
    </source>
</evidence>
<evidence type="ECO:0000255" key="2">
    <source>
        <dbReference type="PROSITE-ProRule" id="PRU00679"/>
    </source>
</evidence>
<evidence type="ECO:0000269" key="3">
    <source>
    </source>
</evidence>
<evidence type="ECO:0000269" key="4">
    <source ref="1"/>
</evidence>
<evidence type="ECO:0000305" key="5"/>
<evidence type="ECO:0007744" key="6">
    <source>
        <dbReference type="PDB" id="1DPM"/>
    </source>
</evidence>
<evidence type="ECO:0007744" key="7">
    <source>
        <dbReference type="PDB" id="1EYW"/>
    </source>
</evidence>
<evidence type="ECO:0007744" key="8">
    <source>
        <dbReference type="PDB" id="1EZ2"/>
    </source>
</evidence>
<evidence type="ECO:0007744" key="9">
    <source>
        <dbReference type="PDB" id="1HZY"/>
    </source>
</evidence>
<evidence type="ECO:0007744" key="10">
    <source>
        <dbReference type="PDB" id="2O4M"/>
    </source>
</evidence>
<evidence type="ECO:0007744" key="11">
    <source>
        <dbReference type="PDB" id="2O4Q"/>
    </source>
</evidence>
<evidence type="ECO:0007744" key="12">
    <source>
        <dbReference type="PDB" id="2OB3"/>
    </source>
</evidence>
<evidence type="ECO:0007744" key="13">
    <source>
        <dbReference type="PDB" id="2OQL"/>
    </source>
</evidence>
<evidence type="ECO:0007829" key="14">
    <source>
        <dbReference type="PDB" id="1HZY"/>
    </source>
</evidence>
<evidence type="ECO:0007829" key="15">
    <source>
        <dbReference type="PDB" id="1PTA"/>
    </source>
</evidence>
<evidence type="ECO:0007829" key="16">
    <source>
        <dbReference type="PDB" id="2OB3"/>
    </source>
</evidence>
<evidence type="ECO:0007829" key="17">
    <source>
        <dbReference type="PDB" id="6AML"/>
    </source>
</evidence>
<evidence type="ECO:0007829" key="18">
    <source>
        <dbReference type="PDB" id="6FRZ"/>
    </source>
</evidence>
<evidence type="ECO:0007829" key="19">
    <source>
        <dbReference type="PDB" id="8P7F"/>
    </source>
</evidence>
<geneLocation type="plasmid">
    <name>pCMS1</name>
</geneLocation>
<name>OPD_BREDI</name>
<protein>
    <recommendedName>
        <fullName>Parathion hydrolase</fullName>
        <ecNumber>3.1.8.1</ecNumber>
    </recommendedName>
    <alternativeName>
        <fullName>Phosphotriesterase</fullName>
        <shortName>PTE</shortName>
    </alternativeName>
</protein>
<keyword id="KW-0002">3D-structure</keyword>
<keyword id="KW-1003">Cell membrane</keyword>
<keyword id="KW-0903">Direct protein sequencing</keyword>
<keyword id="KW-0378">Hydrolase</keyword>
<keyword id="KW-0472">Membrane</keyword>
<keyword id="KW-0479">Metal-binding</keyword>
<keyword id="KW-0614">Plasmid</keyword>
<keyword id="KW-0732">Signal</keyword>
<keyword id="KW-0862">Zinc</keyword>
<sequence length="365" mass="39004">MQTRRVVLKSAAAAGTLLGGLAGCASVAGSIGTGDRINTVRGPITISEAGFTLTHEHICGSSAGFLRAWPEFFGSRKALAEKAVRGLRRARAAGVRTIVDVSTFDIGRDVSLLAEVSRAADVHIVAATGLWFDPPLSMRLRSVEELTQFFLREIQYGIEDTGIRAGIIKVATTGKATPFQELVLKAAARASLATGVPVTTHTAASQRDGEQQAAIFESEGLSPSRVCIGHSDDTDDLSYLTALAARGYLIGLDHIPHSAIGLEDNASASALLGIRSWQTRALLIKALIDQGYMKQILVSNDWLFGFSSYVTNIMDVMDRVNPDGMAFIPLRVIPFLREKGVPQETLAGITVTNPARFLSPTLRAS</sequence>